<dbReference type="EMBL" id="BX470166">
    <property type="protein sequence ID" value="CAK04663.1"/>
    <property type="molecule type" value="Genomic_DNA"/>
</dbReference>
<dbReference type="RefSeq" id="NP_001037812.1">
    <property type="nucleotide sequence ID" value="NM_001044347.1"/>
</dbReference>
<dbReference type="FunCoup" id="Q1LX49">
    <property type="interactions" value="10"/>
</dbReference>
<dbReference type="STRING" id="7955.ENSDARP00000120653"/>
<dbReference type="PaxDb" id="7955-ENSDARP00000084619"/>
<dbReference type="Ensembl" id="ENSDART00000141367">
    <property type="protein sequence ID" value="ENSDARP00000120653"/>
    <property type="gene ID" value="ENSDARG00000062381"/>
</dbReference>
<dbReference type="GeneID" id="556432"/>
<dbReference type="KEGG" id="dre:556432"/>
<dbReference type="AGR" id="ZFIN:ZDB-GENE-050419-80"/>
<dbReference type="CTD" id="57189"/>
<dbReference type="ZFIN" id="ZDB-GENE-050419-80">
    <property type="gene designation" value="dennd11"/>
</dbReference>
<dbReference type="eggNOG" id="KOG4704">
    <property type="taxonomic scope" value="Eukaryota"/>
</dbReference>
<dbReference type="HOGENOM" id="CLU_049607_0_0_1"/>
<dbReference type="InParanoid" id="Q1LX49"/>
<dbReference type="OMA" id="KYMYPEM"/>
<dbReference type="OrthoDB" id="2152680at2759"/>
<dbReference type="PhylomeDB" id="Q1LX49"/>
<dbReference type="PRO" id="PR:Q1LX49"/>
<dbReference type="Proteomes" id="UP000000437">
    <property type="component" value="Alternate scaffold 18"/>
</dbReference>
<dbReference type="Proteomes" id="UP000000437">
    <property type="component" value="Chromosome 18"/>
</dbReference>
<dbReference type="Bgee" id="ENSDARG00000062381">
    <property type="expression patterns" value="Expressed in granulocyte and 21 other cell types or tissues"/>
</dbReference>
<dbReference type="ExpressionAtlas" id="Q1LX49">
    <property type="expression patterns" value="baseline and differential"/>
</dbReference>
<dbReference type="GO" id="GO:0005737">
    <property type="term" value="C:cytoplasm"/>
    <property type="evidence" value="ECO:0000318"/>
    <property type="project" value="GO_Central"/>
</dbReference>
<dbReference type="GO" id="GO:0005085">
    <property type="term" value="F:guanyl-nucleotide exchange factor activity"/>
    <property type="evidence" value="ECO:0007669"/>
    <property type="project" value="UniProtKB-KW"/>
</dbReference>
<dbReference type="InterPro" id="IPR051731">
    <property type="entry name" value="DENND11/AVL9_GEFs"/>
</dbReference>
<dbReference type="InterPro" id="IPR018626">
    <property type="entry name" value="LCHN/Anr2"/>
</dbReference>
<dbReference type="InterPro" id="IPR037516">
    <property type="entry name" value="Tripartite_DENN"/>
</dbReference>
<dbReference type="PANTHER" id="PTHR31017:SF2">
    <property type="entry name" value="DENN DOMAIN-CONTAINING PROTEIN 11"/>
    <property type="match status" value="1"/>
</dbReference>
<dbReference type="PANTHER" id="PTHR31017">
    <property type="entry name" value="LATE SECRETORY PATHWAY PROTEIN AVL9-RELATED"/>
    <property type="match status" value="1"/>
</dbReference>
<dbReference type="Pfam" id="PF09804">
    <property type="entry name" value="DENND11"/>
    <property type="match status" value="1"/>
</dbReference>
<dbReference type="PROSITE" id="PS50211">
    <property type="entry name" value="DENN"/>
    <property type="match status" value="1"/>
</dbReference>
<reference key="1">
    <citation type="journal article" date="2013" name="Nature">
        <title>The zebrafish reference genome sequence and its relationship to the human genome.</title>
        <authorList>
            <person name="Howe K."/>
            <person name="Clark M.D."/>
            <person name="Torroja C.F."/>
            <person name="Torrance J."/>
            <person name="Berthelot C."/>
            <person name="Muffato M."/>
            <person name="Collins J.E."/>
            <person name="Humphray S."/>
            <person name="McLaren K."/>
            <person name="Matthews L."/>
            <person name="McLaren S."/>
            <person name="Sealy I."/>
            <person name="Caccamo M."/>
            <person name="Churcher C."/>
            <person name="Scott C."/>
            <person name="Barrett J.C."/>
            <person name="Koch R."/>
            <person name="Rauch G.J."/>
            <person name="White S."/>
            <person name="Chow W."/>
            <person name="Kilian B."/>
            <person name="Quintais L.T."/>
            <person name="Guerra-Assuncao J.A."/>
            <person name="Zhou Y."/>
            <person name="Gu Y."/>
            <person name="Yen J."/>
            <person name="Vogel J.H."/>
            <person name="Eyre T."/>
            <person name="Redmond S."/>
            <person name="Banerjee R."/>
            <person name="Chi J."/>
            <person name="Fu B."/>
            <person name="Langley E."/>
            <person name="Maguire S.F."/>
            <person name="Laird G.K."/>
            <person name="Lloyd D."/>
            <person name="Kenyon E."/>
            <person name="Donaldson S."/>
            <person name="Sehra H."/>
            <person name="Almeida-King J."/>
            <person name="Loveland J."/>
            <person name="Trevanion S."/>
            <person name="Jones M."/>
            <person name="Quail M."/>
            <person name="Willey D."/>
            <person name="Hunt A."/>
            <person name="Burton J."/>
            <person name="Sims S."/>
            <person name="McLay K."/>
            <person name="Plumb B."/>
            <person name="Davis J."/>
            <person name="Clee C."/>
            <person name="Oliver K."/>
            <person name="Clark R."/>
            <person name="Riddle C."/>
            <person name="Elliot D."/>
            <person name="Threadgold G."/>
            <person name="Harden G."/>
            <person name="Ware D."/>
            <person name="Begum S."/>
            <person name="Mortimore B."/>
            <person name="Kerry G."/>
            <person name="Heath P."/>
            <person name="Phillimore B."/>
            <person name="Tracey A."/>
            <person name="Corby N."/>
            <person name="Dunn M."/>
            <person name="Johnson C."/>
            <person name="Wood J."/>
            <person name="Clark S."/>
            <person name="Pelan S."/>
            <person name="Griffiths G."/>
            <person name="Smith M."/>
            <person name="Glithero R."/>
            <person name="Howden P."/>
            <person name="Barker N."/>
            <person name="Lloyd C."/>
            <person name="Stevens C."/>
            <person name="Harley J."/>
            <person name="Holt K."/>
            <person name="Panagiotidis G."/>
            <person name="Lovell J."/>
            <person name="Beasley H."/>
            <person name="Henderson C."/>
            <person name="Gordon D."/>
            <person name="Auger K."/>
            <person name="Wright D."/>
            <person name="Collins J."/>
            <person name="Raisen C."/>
            <person name="Dyer L."/>
            <person name="Leung K."/>
            <person name="Robertson L."/>
            <person name="Ambridge K."/>
            <person name="Leongamornlert D."/>
            <person name="McGuire S."/>
            <person name="Gilderthorp R."/>
            <person name="Griffiths C."/>
            <person name="Manthravadi D."/>
            <person name="Nichol S."/>
            <person name="Barker G."/>
            <person name="Whitehead S."/>
            <person name="Kay M."/>
            <person name="Brown J."/>
            <person name="Murnane C."/>
            <person name="Gray E."/>
            <person name="Humphries M."/>
            <person name="Sycamore N."/>
            <person name="Barker D."/>
            <person name="Saunders D."/>
            <person name="Wallis J."/>
            <person name="Babbage A."/>
            <person name="Hammond S."/>
            <person name="Mashreghi-Mohammadi M."/>
            <person name="Barr L."/>
            <person name="Martin S."/>
            <person name="Wray P."/>
            <person name="Ellington A."/>
            <person name="Matthews N."/>
            <person name="Ellwood M."/>
            <person name="Woodmansey R."/>
            <person name="Clark G."/>
            <person name="Cooper J."/>
            <person name="Tromans A."/>
            <person name="Grafham D."/>
            <person name="Skuce C."/>
            <person name="Pandian R."/>
            <person name="Andrews R."/>
            <person name="Harrison E."/>
            <person name="Kimberley A."/>
            <person name="Garnett J."/>
            <person name="Fosker N."/>
            <person name="Hall R."/>
            <person name="Garner P."/>
            <person name="Kelly D."/>
            <person name="Bird C."/>
            <person name="Palmer S."/>
            <person name="Gehring I."/>
            <person name="Berger A."/>
            <person name="Dooley C.M."/>
            <person name="Ersan-Urun Z."/>
            <person name="Eser C."/>
            <person name="Geiger H."/>
            <person name="Geisler M."/>
            <person name="Karotki L."/>
            <person name="Kirn A."/>
            <person name="Konantz J."/>
            <person name="Konantz M."/>
            <person name="Oberlander M."/>
            <person name="Rudolph-Geiger S."/>
            <person name="Teucke M."/>
            <person name="Lanz C."/>
            <person name="Raddatz G."/>
            <person name="Osoegawa K."/>
            <person name="Zhu B."/>
            <person name="Rapp A."/>
            <person name="Widaa S."/>
            <person name="Langford C."/>
            <person name="Yang F."/>
            <person name="Schuster S.C."/>
            <person name="Carter N.P."/>
            <person name="Harrow J."/>
            <person name="Ning Z."/>
            <person name="Herrero J."/>
            <person name="Searle S.M."/>
            <person name="Enright A."/>
            <person name="Geisler R."/>
            <person name="Plasterk R.H."/>
            <person name="Lee C."/>
            <person name="Westerfield M."/>
            <person name="de Jong P.J."/>
            <person name="Zon L.I."/>
            <person name="Postlethwait J.H."/>
            <person name="Nusslein-Volhard C."/>
            <person name="Hubbard T.J."/>
            <person name="Roest Crollius H."/>
            <person name="Rogers J."/>
            <person name="Stemple D.L."/>
        </authorList>
    </citation>
    <scope>NUCLEOTIDE SEQUENCE [LARGE SCALE GENOMIC DNA]</scope>
    <source>
        <strain>Tuebingen</strain>
    </source>
</reference>
<feature type="chain" id="PRO_0000315224" description="DENN domain-containing protein 11">
    <location>
        <begin position="1"/>
        <end position="490"/>
    </location>
</feature>
<feature type="domain" description="uDENN" evidence="1">
    <location>
        <begin position="19"/>
        <end position="221"/>
    </location>
</feature>
<feature type="domain" description="cDENN" evidence="1">
    <location>
        <begin position="249"/>
        <end position="397"/>
    </location>
</feature>
<feature type="domain" description="dDENN" evidence="1">
    <location>
        <begin position="399"/>
        <end position="490"/>
    </location>
</feature>
<feature type="region of interest" description="Disordered" evidence="2">
    <location>
        <begin position="1"/>
        <end position="86"/>
    </location>
</feature>
<feature type="compositionally biased region" description="Polar residues" evidence="2">
    <location>
        <begin position="30"/>
        <end position="43"/>
    </location>
</feature>
<feature type="compositionally biased region" description="Polar residues" evidence="2">
    <location>
        <begin position="52"/>
        <end position="61"/>
    </location>
</feature>
<keyword id="KW-0344">Guanine-nucleotide releasing factor</keyword>
<keyword id="KW-1185">Reference proteome</keyword>
<accession>Q1LX49</accession>
<evidence type="ECO:0000255" key="1">
    <source>
        <dbReference type="PROSITE-ProRule" id="PRU00304"/>
    </source>
</evidence>
<evidence type="ECO:0000256" key="2">
    <source>
        <dbReference type="SAM" id="MobiDB-lite"/>
    </source>
</evidence>
<evidence type="ECO:0000305" key="3"/>
<organism>
    <name type="scientific">Danio rerio</name>
    <name type="common">Zebrafish</name>
    <name type="synonym">Brachydanio rerio</name>
    <dbReference type="NCBI Taxonomy" id="7955"/>
    <lineage>
        <taxon>Eukaryota</taxon>
        <taxon>Metazoa</taxon>
        <taxon>Chordata</taxon>
        <taxon>Craniata</taxon>
        <taxon>Vertebrata</taxon>
        <taxon>Euteleostomi</taxon>
        <taxon>Actinopterygii</taxon>
        <taxon>Neopterygii</taxon>
        <taxon>Teleostei</taxon>
        <taxon>Ostariophysi</taxon>
        <taxon>Cypriniformes</taxon>
        <taxon>Danionidae</taxon>
        <taxon>Danioninae</taxon>
        <taxon>Danio</taxon>
    </lineage>
</organism>
<name>DEN11_DANRE</name>
<protein>
    <recommendedName>
        <fullName evidence="3">DENN domain-containing protein 11</fullName>
        <shortName>DENND11</shortName>
    </recommendedName>
    <alternativeName>
        <fullName>Protein LCHN</fullName>
    </alternativeName>
</protein>
<comment type="function">
    <text evidence="3">Probable guanine nucleotide exchange factor (GEF). May promote the exchange of GDP to GTP, converting inactive GDP-bound small GTPases into their active GTP-bound form.</text>
</comment>
<comment type="similarity">
    <text evidence="3">Belongs to the DENND11 family.</text>
</comment>
<sequence>MVEQSDRAPLLDWEEIPPAELAPSVPSPDTGDSLQSGLSSYPTEATLGADITLNTSPTRPSSVAAVHSPHKQHSGPGGDALAEEDEPGDCAFHGLSVRDRRITGWEEKDQIVAVFVVTFDTRSGNMIEWCLPHDVNLEGVEFKSMASGSHRISSDFIYFRKGCYFGLACFANMPVESELERGARMKSVGILSPSYTLLYRYMHFLENQVRHQLQCPGQYSPLEAFYEDKKAVLPSGGNGLVTACPTSALAPIVNRCMHPEMKITHPAGCMSQFIRFFGEQIMVLWKFALLRKRILIFSPPPVGVVCYRVYCCCCLANVSIPGMGVSVPEFRPFFYINVADIPALETELSYVACTTEKIFEEKKELYDVYIDNQNVKTHRESLQPLLRLNSADREKYRKLCEQRQLLLYSQEVDGDCTSNEEDLFILFFMEQNNRIFQTLSEVAVSADPTLTAEHVRAMGLDPQGDRGFLVDLLEIYGIDVMLVIDNPCCP</sequence>
<gene>
    <name type="primary">dennd11</name>
    <name type="synonym">lchn</name>
    <name type="ORF">si:ch211-238n5.4</name>
</gene>
<proteinExistence type="inferred from homology"/>